<sequence>AETLSGQTPLFAGSTGGLLKKAEVEEKYAITWTSPKAQVFELPTGGAATMQQGQNLLYLARKEYGIALGGQLRKFKITDYKIYRILPGGETTLIHPADGVFPEKVNAGREKVRFVPRRIGENPNPSAIKFSGKYTYDA</sequence>
<proteinExistence type="evidence at protein level"/>
<dbReference type="SMR" id="P23808"/>
<dbReference type="GO" id="GO:0009538">
    <property type="term" value="C:photosystem I reaction center"/>
    <property type="evidence" value="ECO:0007669"/>
    <property type="project" value="InterPro"/>
</dbReference>
<dbReference type="GO" id="GO:0015979">
    <property type="term" value="P:photosynthesis"/>
    <property type="evidence" value="ECO:0007669"/>
    <property type="project" value="UniProtKB-KW"/>
</dbReference>
<dbReference type="Gene3D" id="3.30.1470.10">
    <property type="entry name" value="Photosystem I PsaD, reaction center subunit II"/>
    <property type="match status" value="1"/>
</dbReference>
<dbReference type="InterPro" id="IPR003685">
    <property type="entry name" value="PsaD"/>
</dbReference>
<dbReference type="InterPro" id="IPR036579">
    <property type="entry name" value="PsaD_sf"/>
</dbReference>
<dbReference type="PANTHER" id="PTHR31982:SF5">
    <property type="entry name" value="PHOTOSYSTEM I REACTION CENTER SUBUNIT II, CHLOROPLASTIC"/>
    <property type="match status" value="1"/>
</dbReference>
<dbReference type="PANTHER" id="PTHR31982">
    <property type="entry name" value="PHOTOSYSTEM I REACTION CENTER SUBUNIT II-1, CHLOROPLASTIC-RELATED"/>
    <property type="match status" value="1"/>
</dbReference>
<dbReference type="Pfam" id="PF02531">
    <property type="entry name" value="PsaD"/>
    <property type="match status" value="1"/>
</dbReference>
<dbReference type="SUPFAM" id="SSF64234">
    <property type="entry name" value="Photosystem I subunit PsaD"/>
    <property type="match status" value="1"/>
</dbReference>
<name>PSAD_MICDP</name>
<keyword id="KW-0903">Direct protein sequencing</keyword>
<keyword id="KW-0602">Photosynthesis</keyword>
<keyword id="KW-0603">Photosystem I</keyword>
<evidence type="ECO:0000305" key="1"/>
<gene>
    <name type="primary">psaD</name>
</gene>
<protein>
    <recommendedName>
        <fullName>Photosystem I reaction center subunit II</fullName>
    </recommendedName>
    <alternativeName>
        <fullName>Photosystem I 16 kDa polypeptide</fullName>
        <shortName>PSI-D</shortName>
    </alternativeName>
</protein>
<accession>P23808</accession>
<reference key="1">
    <citation type="journal article" date="1991" name="Biol. Chem. Hoppe-Seyler">
        <title>The amino-acid sequence of three proteins of photosystem I of the cyanobacterium Fremyella diplosiphon (Calothrix sp PCC 7601).</title>
        <authorList>
            <person name="Mann K."/>
            <person name="Schlenkrich T."/>
            <person name="Bauer M."/>
            <person name="Huber R."/>
        </authorList>
    </citation>
    <scope>PROTEIN SEQUENCE</scope>
    <source>
        <strain>UTEX 590 / SAG B 1429-1b</strain>
    </source>
</reference>
<organism>
    <name type="scientific">Microchaete diplosiphon</name>
    <name type="common">Fremyella diplosiphon</name>
    <dbReference type="NCBI Taxonomy" id="1197"/>
    <lineage>
        <taxon>Bacteria</taxon>
        <taxon>Bacillati</taxon>
        <taxon>Cyanobacteriota</taxon>
        <taxon>Cyanophyceae</taxon>
        <taxon>Nostocales</taxon>
        <taxon>Rivulariaceae</taxon>
        <taxon>Microchaete</taxon>
    </lineage>
</organism>
<comment type="function">
    <text>PsaD can form complexes with ferredoxin and ferredoxin-oxidoreductase in photosystem I (PS I) reaction center.</text>
</comment>
<comment type="similarity">
    <text evidence="1">Belongs to the PsaD family.</text>
</comment>
<feature type="chain" id="PRO_0000206050" description="Photosystem I reaction center subunit II">
    <location>
        <begin position="1"/>
        <end position="138"/>
    </location>
</feature>